<sequence length="185" mass="20079">MACPNWRVRLAARIIRGGGVIAYPTEGVFGLGCDPGRKAAIERILQLKGRSISKGFILIAADFVQLQSYLLPLTASTRSRLEVTWPGPVTWLLPARGDVPPWLRGRYDTLAVRVTAHPLAACLCRTLGHALVSTSANRAGRPPAQTTLQVRRSFGSSLDYILPGITGKRAGPSEIRDGRTGQRLR</sequence>
<name>TSAC_NITOC</name>
<keyword id="KW-0067">ATP-binding</keyword>
<keyword id="KW-0963">Cytoplasm</keyword>
<keyword id="KW-0547">Nucleotide-binding</keyword>
<keyword id="KW-0548">Nucleotidyltransferase</keyword>
<keyword id="KW-1185">Reference proteome</keyword>
<keyword id="KW-0808">Transferase</keyword>
<keyword id="KW-0819">tRNA processing</keyword>
<organism>
    <name type="scientific">Nitrosococcus oceani (strain ATCC 19707 / BCRC 17464 / JCM 30415 / NCIMB 11848 / C-107)</name>
    <dbReference type="NCBI Taxonomy" id="323261"/>
    <lineage>
        <taxon>Bacteria</taxon>
        <taxon>Pseudomonadati</taxon>
        <taxon>Pseudomonadota</taxon>
        <taxon>Gammaproteobacteria</taxon>
        <taxon>Chromatiales</taxon>
        <taxon>Chromatiaceae</taxon>
        <taxon>Nitrosococcus</taxon>
    </lineage>
</organism>
<feature type="chain" id="PRO_0000352942" description="Threonylcarbamoyl-AMP synthase">
    <location>
        <begin position="1"/>
        <end position="185"/>
    </location>
</feature>
<feature type="domain" description="YrdC-like" evidence="1">
    <location>
        <begin position="5"/>
        <end position="185"/>
    </location>
</feature>
<accession>Q3J7C4</accession>
<proteinExistence type="inferred from homology"/>
<dbReference type="EC" id="2.7.7.87" evidence="1"/>
<dbReference type="EMBL" id="CP000127">
    <property type="protein sequence ID" value="ABA59272.1"/>
    <property type="molecule type" value="Genomic_DNA"/>
</dbReference>
<dbReference type="RefSeq" id="WP_002813552.1">
    <property type="nucleotide sequence ID" value="NC_007484.1"/>
</dbReference>
<dbReference type="SMR" id="Q3J7C4"/>
<dbReference type="FunCoup" id="Q3J7C4">
    <property type="interactions" value="291"/>
</dbReference>
<dbReference type="STRING" id="323261.Noc_2825"/>
<dbReference type="KEGG" id="noc:Noc_2825"/>
<dbReference type="eggNOG" id="COG0009">
    <property type="taxonomic scope" value="Bacteria"/>
</dbReference>
<dbReference type="HOGENOM" id="CLU_031397_6_0_6"/>
<dbReference type="InParanoid" id="Q3J7C4"/>
<dbReference type="Proteomes" id="UP000006838">
    <property type="component" value="Chromosome"/>
</dbReference>
<dbReference type="GO" id="GO:0005737">
    <property type="term" value="C:cytoplasm"/>
    <property type="evidence" value="ECO:0007669"/>
    <property type="project" value="UniProtKB-SubCell"/>
</dbReference>
<dbReference type="GO" id="GO:0005524">
    <property type="term" value="F:ATP binding"/>
    <property type="evidence" value="ECO:0007669"/>
    <property type="project" value="UniProtKB-UniRule"/>
</dbReference>
<dbReference type="GO" id="GO:0003725">
    <property type="term" value="F:double-stranded RNA binding"/>
    <property type="evidence" value="ECO:0007669"/>
    <property type="project" value="InterPro"/>
</dbReference>
<dbReference type="GO" id="GO:0061710">
    <property type="term" value="F:L-threonylcarbamoyladenylate synthase"/>
    <property type="evidence" value="ECO:0007669"/>
    <property type="project" value="UniProtKB-EC"/>
</dbReference>
<dbReference type="GO" id="GO:0000049">
    <property type="term" value="F:tRNA binding"/>
    <property type="evidence" value="ECO:0007669"/>
    <property type="project" value="TreeGrafter"/>
</dbReference>
<dbReference type="GO" id="GO:0006450">
    <property type="term" value="P:regulation of translational fidelity"/>
    <property type="evidence" value="ECO:0007669"/>
    <property type="project" value="TreeGrafter"/>
</dbReference>
<dbReference type="GO" id="GO:0002949">
    <property type="term" value="P:tRNA threonylcarbamoyladenosine modification"/>
    <property type="evidence" value="ECO:0007669"/>
    <property type="project" value="UniProtKB-UniRule"/>
</dbReference>
<dbReference type="FunFam" id="3.90.870.10:FF:000004">
    <property type="entry name" value="Threonylcarbamoyl-AMP synthase"/>
    <property type="match status" value="1"/>
</dbReference>
<dbReference type="Gene3D" id="3.90.870.10">
    <property type="entry name" value="DHBP synthase"/>
    <property type="match status" value="1"/>
</dbReference>
<dbReference type="HAMAP" id="MF_01852">
    <property type="entry name" value="TsaC"/>
    <property type="match status" value="1"/>
</dbReference>
<dbReference type="InterPro" id="IPR017945">
    <property type="entry name" value="DHBP_synth_RibB-like_a/b_dom"/>
</dbReference>
<dbReference type="InterPro" id="IPR006070">
    <property type="entry name" value="Sua5-like_dom"/>
</dbReference>
<dbReference type="InterPro" id="IPR023535">
    <property type="entry name" value="TC-AMP_synthase"/>
</dbReference>
<dbReference type="InterPro" id="IPR050156">
    <property type="entry name" value="TC-AMP_synthase_SUA5"/>
</dbReference>
<dbReference type="PANTHER" id="PTHR17490">
    <property type="entry name" value="SUA5"/>
    <property type="match status" value="1"/>
</dbReference>
<dbReference type="PANTHER" id="PTHR17490:SF18">
    <property type="entry name" value="THREONYLCARBAMOYL-AMP SYNTHASE"/>
    <property type="match status" value="1"/>
</dbReference>
<dbReference type="Pfam" id="PF01300">
    <property type="entry name" value="Sua5_yciO_yrdC"/>
    <property type="match status" value="1"/>
</dbReference>
<dbReference type="SUPFAM" id="SSF55821">
    <property type="entry name" value="YrdC/RibB"/>
    <property type="match status" value="1"/>
</dbReference>
<dbReference type="PROSITE" id="PS51163">
    <property type="entry name" value="YRDC"/>
    <property type="match status" value="1"/>
</dbReference>
<reference key="1">
    <citation type="journal article" date="2006" name="Appl. Environ. Microbiol.">
        <title>Complete genome sequence of the marine, chemolithoautotrophic, ammonia-oxidizing bacterium Nitrosococcus oceani ATCC 19707.</title>
        <authorList>
            <person name="Klotz M.G."/>
            <person name="Arp D.J."/>
            <person name="Chain P.S.G."/>
            <person name="El-Sheikh A.F."/>
            <person name="Hauser L.J."/>
            <person name="Hommes N.G."/>
            <person name="Larimer F.W."/>
            <person name="Malfatti S.A."/>
            <person name="Norton J.M."/>
            <person name="Poret-Peterson A.T."/>
            <person name="Vergez L.M."/>
            <person name="Ward B.B."/>
        </authorList>
    </citation>
    <scope>NUCLEOTIDE SEQUENCE [LARGE SCALE GENOMIC DNA]</scope>
    <source>
        <strain>ATCC 19707 / BCRC 17464 / JCM 30415 / NCIMB 11848 / C-107</strain>
    </source>
</reference>
<evidence type="ECO:0000255" key="1">
    <source>
        <dbReference type="HAMAP-Rule" id="MF_01852"/>
    </source>
</evidence>
<protein>
    <recommendedName>
        <fullName evidence="1">Threonylcarbamoyl-AMP synthase</fullName>
        <shortName evidence="1">TC-AMP synthase</shortName>
        <ecNumber evidence="1">2.7.7.87</ecNumber>
    </recommendedName>
    <alternativeName>
        <fullName evidence="1">L-threonylcarbamoyladenylate synthase</fullName>
    </alternativeName>
    <alternativeName>
        <fullName evidence="1">t(6)A37 threonylcarbamoyladenosine biosynthesis protein TsaC</fullName>
    </alternativeName>
    <alternativeName>
        <fullName evidence="1">tRNA threonylcarbamoyladenosine biosynthesis protein TsaC</fullName>
    </alternativeName>
</protein>
<gene>
    <name evidence="1" type="primary">tsaC</name>
    <name type="synonym">rimN</name>
    <name type="ordered locus">Noc_2825</name>
</gene>
<comment type="function">
    <text evidence="1">Required for the formation of a threonylcarbamoyl group on adenosine at position 37 (t(6)A37) in tRNAs that read codons beginning with adenine. Catalyzes the conversion of L-threonine, HCO(3)(-)/CO(2) and ATP to give threonylcarbamoyl-AMP (TC-AMP) as the acyladenylate intermediate, with the release of diphosphate.</text>
</comment>
<comment type="catalytic activity">
    <reaction evidence="1">
        <text>L-threonine + hydrogencarbonate + ATP = L-threonylcarbamoyladenylate + diphosphate + H2O</text>
        <dbReference type="Rhea" id="RHEA:36407"/>
        <dbReference type="ChEBI" id="CHEBI:15377"/>
        <dbReference type="ChEBI" id="CHEBI:17544"/>
        <dbReference type="ChEBI" id="CHEBI:30616"/>
        <dbReference type="ChEBI" id="CHEBI:33019"/>
        <dbReference type="ChEBI" id="CHEBI:57926"/>
        <dbReference type="ChEBI" id="CHEBI:73682"/>
        <dbReference type="EC" id="2.7.7.87"/>
    </reaction>
</comment>
<comment type="subcellular location">
    <subcellularLocation>
        <location evidence="1">Cytoplasm</location>
    </subcellularLocation>
</comment>
<comment type="similarity">
    <text evidence="1">Belongs to the SUA5 family. TsaC subfamily.</text>
</comment>